<evidence type="ECO:0000255" key="1">
    <source>
        <dbReference type="HAMAP-Rule" id="MF_01564"/>
    </source>
</evidence>
<comment type="function">
    <text evidence="1">Part of a sulfur-relay system required for 2-thiolation of 5-methylaminomethyl-2-thiouridine (mnm(5)s(2)U) at tRNA wobble positions.</text>
</comment>
<comment type="subunit">
    <text evidence="1">Heterohexamer, formed by a dimer of trimers. The hexameric TusBCD complex contains 2 copies each of TusB, TusC and TusD. The TusBCD complex interacts with TusE.</text>
</comment>
<comment type="subcellular location">
    <subcellularLocation>
        <location evidence="1">Cytoplasm</location>
    </subcellularLocation>
</comment>
<comment type="similarity">
    <text evidence="1">Belongs to the DsrH/TusB family.</text>
</comment>
<protein>
    <recommendedName>
        <fullName evidence="1">Protein TusB</fullName>
    </recommendedName>
    <alternativeName>
        <fullName evidence="1">tRNA 2-thiouridine synthesizing protein B</fullName>
    </alternativeName>
</protein>
<gene>
    <name evidence="1" type="primary">tusB</name>
    <name type="ordered locus">ECIAI1_3479</name>
</gene>
<name>TUSB_ECO8A</name>
<keyword id="KW-0963">Cytoplasm</keyword>
<keyword id="KW-0819">tRNA processing</keyword>
<reference key="1">
    <citation type="journal article" date="2009" name="PLoS Genet.">
        <title>Organised genome dynamics in the Escherichia coli species results in highly diverse adaptive paths.</title>
        <authorList>
            <person name="Touchon M."/>
            <person name="Hoede C."/>
            <person name="Tenaillon O."/>
            <person name="Barbe V."/>
            <person name="Baeriswyl S."/>
            <person name="Bidet P."/>
            <person name="Bingen E."/>
            <person name="Bonacorsi S."/>
            <person name="Bouchier C."/>
            <person name="Bouvet O."/>
            <person name="Calteau A."/>
            <person name="Chiapello H."/>
            <person name="Clermont O."/>
            <person name="Cruveiller S."/>
            <person name="Danchin A."/>
            <person name="Diard M."/>
            <person name="Dossat C."/>
            <person name="Karoui M.E."/>
            <person name="Frapy E."/>
            <person name="Garry L."/>
            <person name="Ghigo J.M."/>
            <person name="Gilles A.M."/>
            <person name="Johnson J."/>
            <person name="Le Bouguenec C."/>
            <person name="Lescat M."/>
            <person name="Mangenot S."/>
            <person name="Martinez-Jehanne V."/>
            <person name="Matic I."/>
            <person name="Nassif X."/>
            <person name="Oztas S."/>
            <person name="Petit M.A."/>
            <person name="Pichon C."/>
            <person name="Rouy Z."/>
            <person name="Ruf C.S."/>
            <person name="Schneider D."/>
            <person name="Tourret J."/>
            <person name="Vacherie B."/>
            <person name="Vallenet D."/>
            <person name="Medigue C."/>
            <person name="Rocha E.P.C."/>
            <person name="Denamur E."/>
        </authorList>
    </citation>
    <scope>NUCLEOTIDE SEQUENCE [LARGE SCALE GENOMIC DNA]</scope>
    <source>
        <strain>IAI1</strain>
    </source>
</reference>
<proteinExistence type="inferred from homology"/>
<accession>B7M1P4</accession>
<feature type="chain" id="PRO_1000147178" description="Protein TusB">
    <location>
        <begin position="1"/>
        <end position="95"/>
    </location>
</feature>
<sequence>MLHTLHRSPWLTDFAALLRLLSEGDELLLLQDGVTAAVDGNRYLESLRNAPIKVYALNEDLIARGLTGQISNDIIPIDYTDFVRLTVKHSSQMAW</sequence>
<dbReference type="EMBL" id="CU928160">
    <property type="protein sequence ID" value="CAR00281.1"/>
    <property type="molecule type" value="Genomic_DNA"/>
</dbReference>
<dbReference type="RefSeq" id="WP_000903377.1">
    <property type="nucleotide sequence ID" value="NC_011741.1"/>
</dbReference>
<dbReference type="SMR" id="B7M1P4"/>
<dbReference type="GeneID" id="75206286"/>
<dbReference type="KEGG" id="ecr:ECIAI1_3479"/>
<dbReference type="HOGENOM" id="CLU_166087_2_1_6"/>
<dbReference type="GO" id="GO:1990228">
    <property type="term" value="C:sulfurtransferase complex"/>
    <property type="evidence" value="ECO:0007669"/>
    <property type="project" value="TreeGrafter"/>
</dbReference>
<dbReference type="GO" id="GO:0002143">
    <property type="term" value="P:tRNA wobble position uridine thiolation"/>
    <property type="evidence" value="ECO:0007669"/>
    <property type="project" value="InterPro"/>
</dbReference>
<dbReference type="FunFam" id="3.40.1260.10:FF:000002">
    <property type="entry name" value="Sulfurtransferase TusB"/>
    <property type="match status" value="1"/>
</dbReference>
<dbReference type="Gene3D" id="3.40.1260.10">
    <property type="entry name" value="DsrEFH-like"/>
    <property type="match status" value="1"/>
</dbReference>
<dbReference type="HAMAP" id="MF_01564">
    <property type="entry name" value="Thiourid_synth_B"/>
    <property type="match status" value="1"/>
</dbReference>
<dbReference type="InterPro" id="IPR027396">
    <property type="entry name" value="DsrEFH-like"/>
</dbReference>
<dbReference type="InterPro" id="IPR023526">
    <property type="entry name" value="Sulphur_relay_TusB"/>
</dbReference>
<dbReference type="InterPro" id="IPR007215">
    <property type="entry name" value="Sulphur_relay_TusB/DsrH"/>
</dbReference>
<dbReference type="NCBIfam" id="NF010035">
    <property type="entry name" value="PRK13510.1"/>
    <property type="match status" value="1"/>
</dbReference>
<dbReference type="NCBIfam" id="TIGR03011">
    <property type="entry name" value="sulf_tusB_dsrH"/>
    <property type="match status" value="1"/>
</dbReference>
<dbReference type="PANTHER" id="PTHR37526">
    <property type="entry name" value="PROTEIN TUSB"/>
    <property type="match status" value="1"/>
</dbReference>
<dbReference type="PANTHER" id="PTHR37526:SF1">
    <property type="entry name" value="PROTEIN TUSB"/>
    <property type="match status" value="1"/>
</dbReference>
<dbReference type="Pfam" id="PF04077">
    <property type="entry name" value="DsrH"/>
    <property type="match status" value="1"/>
</dbReference>
<dbReference type="SUPFAM" id="SSF75169">
    <property type="entry name" value="DsrEFH-like"/>
    <property type="match status" value="1"/>
</dbReference>
<organism>
    <name type="scientific">Escherichia coli O8 (strain IAI1)</name>
    <dbReference type="NCBI Taxonomy" id="585034"/>
    <lineage>
        <taxon>Bacteria</taxon>
        <taxon>Pseudomonadati</taxon>
        <taxon>Pseudomonadota</taxon>
        <taxon>Gammaproteobacteria</taxon>
        <taxon>Enterobacterales</taxon>
        <taxon>Enterobacteriaceae</taxon>
        <taxon>Escherichia</taxon>
    </lineage>
</organism>